<organism>
    <name type="scientific">Escherichia coli (strain SMS-3-5 / SECEC)</name>
    <dbReference type="NCBI Taxonomy" id="439855"/>
    <lineage>
        <taxon>Bacteria</taxon>
        <taxon>Pseudomonadati</taxon>
        <taxon>Pseudomonadota</taxon>
        <taxon>Gammaproteobacteria</taxon>
        <taxon>Enterobacterales</taxon>
        <taxon>Enterobacteriaceae</taxon>
        <taxon>Escherichia</taxon>
    </lineage>
</organism>
<protein>
    <recommendedName>
        <fullName evidence="1">Met repressor</fullName>
    </recommendedName>
    <alternativeName>
        <fullName evidence="1">Met regulon regulatory protein MetJ</fullName>
    </alternativeName>
</protein>
<name>METJ_ECOSM</name>
<feature type="chain" id="PRO_1000191211" description="Met repressor">
    <location>
        <begin position="1"/>
        <end position="105"/>
    </location>
</feature>
<sequence length="105" mass="12141">MAEWSGEYISPYAEHGKKSEQVKKITVSIPLKVLKILTDERTRRQVNNLRHATNSELLCEAFLHAFTGQPLPDDADLRKERSDEIPEAAKEIMREMGINPETWEY</sequence>
<keyword id="KW-0028">Amino-acid biosynthesis</keyword>
<keyword id="KW-0963">Cytoplasm</keyword>
<keyword id="KW-0238">DNA-binding</keyword>
<keyword id="KW-0486">Methionine biosynthesis</keyword>
<keyword id="KW-0678">Repressor</keyword>
<keyword id="KW-0804">Transcription</keyword>
<keyword id="KW-0805">Transcription regulation</keyword>
<dbReference type="EMBL" id="CP000970">
    <property type="protein sequence ID" value="ACB20081.1"/>
    <property type="molecule type" value="Genomic_DNA"/>
</dbReference>
<dbReference type="RefSeq" id="WP_000852812.1">
    <property type="nucleotide sequence ID" value="NC_010498.1"/>
</dbReference>
<dbReference type="SMR" id="B1LNP3"/>
<dbReference type="GeneID" id="93777954"/>
<dbReference type="KEGG" id="ecm:EcSMS35_4380"/>
<dbReference type="HOGENOM" id="CLU_142318_0_0_6"/>
<dbReference type="Proteomes" id="UP000007011">
    <property type="component" value="Chromosome"/>
</dbReference>
<dbReference type="GO" id="GO:0005737">
    <property type="term" value="C:cytoplasm"/>
    <property type="evidence" value="ECO:0007669"/>
    <property type="project" value="UniProtKB-SubCell"/>
</dbReference>
<dbReference type="GO" id="GO:0003677">
    <property type="term" value="F:DNA binding"/>
    <property type="evidence" value="ECO:0007669"/>
    <property type="project" value="UniProtKB-KW"/>
</dbReference>
<dbReference type="GO" id="GO:0003700">
    <property type="term" value="F:DNA-binding transcription factor activity"/>
    <property type="evidence" value="ECO:0007669"/>
    <property type="project" value="InterPro"/>
</dbReference>
<dbReference type="GO" id="GO:0009086">
    <property type="term" value="P:methionine biosynthetic process"/>
    <property type="evidence" value="ECO:0007669"/>
    <property type="project" value="UniProtKB-UniRule"/>
</dbReference>
<dbReference type="GO" id="GO:0045892">
    <property type="term" value="P:negative regulation of DNA-templated transcription"/>
    <property type="evidence" value="ECO:0007669"/>
    <property type="project" value="UniProtKB-UniRule"/>
</dbReference>
<dbReference type="CDD" id="cd00490">
    <property type="entry name" value="Met_repressor_MetJ"/>
    <property type="match status" value="1"/>
</dbReference>
<dbReference type="FunFam" id="1.10.140.10:FF:000001">
    <property type="entry name" value="Met repressor"/>
    <property type="match status" value="1"/>
</dbReference>
<dbReference type="Gene3D" id="1.10.140.10">
    <property type="entry name" value="MET Apo-Repressor, subunit A"/>
    <property type="match status" value="1"/>
</dbReference>
<dbReference type="HAMAP" id="MF_00744">
    <property type="entry name" value="MetJ"/>
    <property type="match status" value="1"/>
</dbReference>
<dbReference type="InterPro" id="IPR002084">
    <property type="entry name" value="Met_repressor_MetJ"/>
</dbReference>
<dbReference type="InterPro" id="IPR023453">
    <property type="entry name" value="Met_repressor_MetJ_dom_sf"/>
</dbReference>
<dbReference type="InterPro" id="IPR010985">
    <property type="entry name" value="Ribbon_hlx_hlx"/>
</dbReference>
<dbReference type="NCBIfam" id="NF003622">
    <property type="entry name" value="PRK05264.1"/>
    <property type="match status" value="1"/>
</dbReference>
<dbReference type="Pfam" id="PF01340">
    <property type="entry name" value="MetJ"/>
    <property type="match status" value="1"/>
</dbReference>
<dbReference type="SUPFAM" id="SSF47598">
    <property type="entry name" value="Ribbon-helix-helix"/>
    <property type="match status" value="1"/>
</dbReference>
<accession>B1LNP3</accession>
<comment type="function">
    <text evidence="1">This regulatory protein, when combined with SAM (S-adenosylmethionine) represses the expression of the methionine regulon and of enzymes involved in SAM synthesis.</text>
</comment>
<comment type="subunit">
    <text evidence="1">Homodimer.</text>
</comment>
<comment type="subcellular location">
    <subcellularLocation>
        <location evidence="1">Cytoplasm</location>
    </subcellularLocation>
</comment>
<comment type="domain">
    <text>Does not bind DNA by a helix-turn-helix motif.</text>
</comment>
<comment type="similarity">
    <text evidence="1">Belongs to the MetJ family.</text>
</comment>
<evidence type="ECO:0000255" key="1">
    <source>
        <dbReference type="HAMAP-Rule" id="MF_00744"/>
    </source>
</evidence>
<reference key="1">
    <citation type="journal article" date="2008" name="J. Bacteriol.">
        <title>Insights into the environmental resistance gene pool from the genome sequence of the multidrug-resistant environmental isolate Escherichia coli SMS-3-5.</title>
        <authorList>
            <person name="Fricke W.F."/>
            <person name="Wright M.S."/>
            <person name="Lindell A.H."/>
            <person name="Harkins D.M."/>
            <person name="Baker-Austin C."/>
            <person name="Ravel J."/>
            <person name="Stepanauskas R."/>
        </authorList>
    </citation>
    <scope>NUCLEOTIDE SEQUENCE [LARGE SCALE GENOMIC DNA]</scope>
    <source>
        <strain>SMS-3-5 / SECEC</strain>
    </source>
</reference>
<gene>
    <name evidence="1" type="primary">metJ</name>
    <name type="ordered locus">EcSMS35_4380</name>
</gene>
<proteinExistence type="inferred from homology"/>